<proteinExistence type="evidence at protein level"/>
<name>PRLR_HUMAN</name>
<reference key="1">
    <citation type="journal article" date="1989" name="Mol. Endocrinol.">
        <title>Identification of a cDNA encoding a long form of prolactin receptor in human hepatoma and breast cancer cells.</title>
        <authorList>
            <person name="Boutin J.-M."/>
            <person name="Edery M."/>
            <person name="Shirota M."/>
            <person name="Jolicoeur C."/>
            <person name="Lesueur L."/>
            <person name="Ali S."/>
            <person name="Gould D."/>
            <person name="Djiane J."/>
            <person name="Kelly P.A."/>
        </authorList>
    </citation>
    <scope>NUCLEOTIDE SEQUENCE [MRNA] (ISOFORM 1)</scope>
</reference>
<reference key="2">
    <citation type="journal article" date="1999" name="J. Biol. Chem.">
        <title>Functional characterization of the intermediate isoform of the human prolactin receptor.</title>
        <authorList>
            <person name="Kline J.B."/>
            <person name="Roehrs H."/>
            <person name="Clevenger C.V."/>
        </authorList>
    </citation>
    <scope>NUCLEOTIDE SEQUENCE [MRNA] (ISOFORM 5)</scope>
</reference>
<reference key="3">
    <citation type="journal article" date="1999" name="J. Clin. Endocrinol. Metab.">
        <title>The human prolactin receptor gene structure and alternative promoter utilization: the generic promoter hPIII and a novel human promoter hP(N).</title>
        <authorList>
            <person name="Hu Z.-Z."/>
            <person name="Zhuang L."/>
            <person name="Meng J."/>
            <person name="Leondires M."/>
            <person name="Dufau M.L."/>
        </authorList>
    </citation>
    <scope>NUCLEOTIDE SEQUENCE [GENOMIC DNA]</scope>
</reference>
<reference key="4">
    <citation type="journal article" date="2001" name="J. Biol. Chem.">
        <title>Isolation and characterization of two novel forms of the human prolactin receptor generated by alternative splicing of a newly identified exon 11.</title>
        <authorList>
            <person name="Hu Z.Z."/>
            <person name="Meng J."/>
            <person name="Dufau M.L."/>
        </authorList>
    </citation>
    <scope>NUCLEOTIDE SEQUENCE [MRNA] (ISOFORMS 1; 4 AND 6)</scope>
    <scope>INTERACTION WITH GH1</scope>
    <scope>SUBCELLULAR LOCATION</scope>
    <scope>TISSUE SPECIFICITY</scope>
</reference>
<reference key="5">
    <citation type="journal article" date="2002" name="Mol. Endocrinol.">
        <title>Characterization of a novel and functional human prolactin receptor isoform (deltaS1PRLr) containing only one extracellular fibronectin-like domain.</title>
        <authorList>
            <person name="Kline J.B."/>
            <person name="Rycyzyn M.A."/>
            <person name="Clevenger C.V."/>
        </authorList>
    </citation>
    <scope>NUCLEOTIDE SEQUENCE [MRNA] (ISOFORM 2)</scope>
    <source>
        <tissue>Mammary carcinoma</tissue>
    </source>
</reference>
<reference key="6">
    <citation type="journal article" date="2003" name="J. Mol. Endocrinol.">
        <title>Alternative splicing to exon 11 of human prolactin receptor gene results in multiple isoforms including a secreted prolactin-binding protein.</title>
        <authorList>
            <person name="Trott J.F."/>
            <person name="Hovey R.C."/>
            <person name="Koduri S."/>
            <person name="Vonderhaar B.K."/>
        </authorList>
    </citation>
    <scope>NUCLEOTIDE SEQUENCE [MRNA] (ISOFORMS 1; 4; 6; 7 AND 8)</scope>
    <scope>FUNCTION</scope>
    <scope>SUBCELLULAR LOCATION</scope>
    <scope>TISSUE SPECIFICITY</scope>
</reference>
<reference key="7">
    <citation type="journal article" date="2010" name="Endocrinology">
        <title>Prolactin exerts a prosurvival effect on human spermatozoa via mechanisms that involve the stimulation of Akt phosphorylation and suppression of caspase activation and capacitation.</title>
        <authorList>
            <person name="Pujianto D.A."/>
            <person name="Curry B.J."/>
            <person name="Aitken R.J."/>
        </authorList>
    </citation>
    <scope>NUCLEOTIDE SEQUENCE [MRNA] (ISOFORM 9)</scope>
    <scope>FUNCTION</scope>
</reference>
<reference key="8">
    <citation type="journal article" date="2004" name="Nat. Genet.">
        <title>Complete sequencing and characterization of 21,243 full-length human cDNAs.</title>
        <authorList>
            <person name="Ota T."/>
            <person name="Suzuki Y."/>
            <person name="Nishikawa T."/>
            <person name="Otsuki T."/>
            <person name="Sugiyama T."/>
            <person name="Irie R."/>
            <person name="Wakamatsu A."/>
            <person name="Hayashi K."/>
            <person name="Sato H."/>
            <person name="Nagai K."/>
            <person name="Kimura K."/>
            <person name="Makita H."/>
            <person name="Sekine M."/>
            <person name="Obayashi M."/>
            <person name="Nishi T."/>
            <person name="Shibahara T."/>
            <person name="Tanaka T."/>
            <person name="Ishii S."/>
            <person name="Yamamoto J."/>
            <person name="Saito K."/>
            <person name="Kawai Y."/>
            <person name="Isono Y."/>
            <person name="Nakamura Y."/>
            <person name="Nagahari K."/>
            <person name="Murakami K."/>
            <person name="Yasuda T."/>
            <person name="Iwayanagi T."/>
            <person name="Wagatsuma M."/>
            <person name="Shiratori A."/>
            <person name="Sudo H."/>
            <person name="Hosoiri T."/>
            <person name="Kaku Y."/>
            <person name="Kodaira H."/>
            <person name="Kondo H."/>
            <person name="Sugawara M."/>
            <person name="Takahashi M."/>
            <person name="Kanda K."/>
            <person name="Yokoi T."/>
            <person name="Furuya T."/>
            <person name="Kikkawa E."/>
            <person name="Omura Y."/>
            <person name="Abe K."/>
            <person name="Kamihara K."/>
            <person name="Katsuta N."/>
            <person name="Sato K."/>
            <person name="Tanikawa M."/>
            <person name="Yamazaki M."/>
            <person name="Ninomiya K."/>
            <person name="Ishibashi T."/>
            <person name="Yamashita H."/>
            <person name="Murakawa K."/>
            <person name="Fujimori K."/>
            <person name="Tanai H."/>
            <person name="Kimata M."/>
            <person name="Watanabe M."/>
            <person name="Hiraoka S."/>
            <person name="Chiba Y."/>
            <person name="Ishida S."/>
            <person name="Ono Y."/>
            <person name="Takiguchi S."/>
            <person name="Watanabe S."/>
            <person name="Yosida M."/>
            <person name="Hotuta T."/>
            <person name="Kusano J."/>
            <person name="Kanehori K."/>
            <person name="Takahashi-Fujii A."/>
            <person name="Hara H."/>
            <person name="Tanase T.-O."/>
            <person name="Nomura Y."/>
            <person name="Togiya S."/>
            <person name="Komai F."/>
            <person name="Hara R."/>
            <person name="Takeuchi K."/>
            <person name="Arita M."/>
            <person name="Imose N."/>
            <person name="Musashino K."/>
            <person name="Yuuki H."/>
            <person name="Oshima A."/>
            <person name="Sasaki N."/>
            <person name="Aotsuka S."/>
            <person name="Yoshikawa Y."/>
            <person name="Matsunawa H."/>
            <person name="Ichihara T."/>
            <person name="Shiohata N."/>
            <person name="Sano S."/>
            <person name="Moriya S."/>
            <person name="Momiyama H."/>
            <person name="Satoh N."/>
            <person name="Takami S."/>
            <person name="Terashima Y."/>
            <person name="Suzuki O."/>
            <person name="Nakagawa S."/>
            <person name="Senoh A."/>
            <person name="Mizoguchi H."/>
            <person name="Goto Y."/>
            <person name="Shimizu F."/>
            <person name="Wakebe H."/>
            <person name="Hishigaki H."/>
            <person name="Watanabe T."/>
            <person name="Sugiyama A."/>
            <person name="Takemoto M."/>
            <person name="Kawakami B."/>
            <person name="Yamazaki M."/>
            <person name="Watanabe K."/>
            <person name="Kumagai A."/>
            <person name="Itakura S."/>
            <person name="Fukuzumi Y."/>
            <person name="Fujimori Y."/>
            <person name="Komiyama M."/>
            <person name="Tashiro H."/>
            <person name="Tanigami A."/>
            <person name="Fujiwara T."/>
            <person name="Ono T."/>
            <person name="Yamada K."/>
            <person name="Fujii Y."/>
            <person name="Ozaki K."/>
            <person name="Hirao M."/>
            <person name="Ohmori Y."/>
            <person name="Kawabata A."/>
            <person name="Hikiji T."/>
            <person name="Kobatake N."/>
            <person name="Inagaki H."/>
            <person name="Ikema Y."/>
            <person name="Okamoto S."/>
            <person name="Okitani R."/>
            <person name="Kawakami T."/>
            <person name="Noguchi S."/>
            <person name="Itoh T."/>
            <person name="Shigeta K."/>
            <person name="Senba T."/>
            <person name="Matsumura K."/>
            <person name="Nakajima Y."/>
            <person name="Mizuno T."/>
            <person name="Morinaga M."/>
            <person name="Sasaki M."/>
            <person name="Togashi T."/>
            <person name="Oyama M."/>
            <person name="Hata H."/>
            <person name="Watanabe M."/>
            <person name="Komatsu T."/>
            <person name="Mizushima-Sugano J."/>
            <person name="Satoh T."/>
            <person name="Shirai Y."/>
            <person name="Takahashi Y."/>
            <person name="Nakagawa K."/>
            <person name="Okumura K."/>
            <person name="Nagase T."/>
            <person name="Nomura N."/>
            <person name="Kikuchi H."/>
            <person name="Masuho Y."/>
            <person name="Yamashita R."/>
            <person name="Nakai K."/>
            <person name="Yada T."/>
            <person name="Nakamura Y."/>
            <person name="Ohara O."/>
            <person name="Isogai T."/>
            <person name="Sugano S."/>
        </authorList>
    </citation>
    <scope>NUCLEOTIDE SEQUENCE [LARGE SCALE MRNA] (ISOFORM 1)</scope>
    <source>
        <tissue>Prostate</tissue>
    </source>
</reference>
<reference key="9">
    <citation type="journal article" date="2004" name="Nature">
        <title>The DNA sequence and comparative analysis of human chromosome 5.</title>
        <authorList>
            <person name="Schmutz J."/>
            <person name="Martin J."/>
            <person name="Terry A."/>
            <person name="Couronne O."/>
            <person name="Grimwood J."/>
            <person name="Lowry S."/>
            <person name="Gordon L.A."/>
            <person name="Scott D."/>
            <person name="Xie G."/>
            <person name="Huang W."/>
            <person name="Hellsten U."/>
            <person name="Tran-Gyamfi M."/>
            <person name="She X."/>
            <person name="Prabhakar S."/>
            <person name="Aerts A."/>
            <person name="Altherr M."/>
            <person name="Bajorek E."/>
            <person name="Black S."/>
            <person name="Branscomb E."/>
            <person name="Caoile C."/>
            <person name="Challacombe J.F."/>
            <person name="Chan Y.M."/>
            <person name="Denys M."/>
            <person name="Detter J.C."/>
            <person name="Escobar J."/>
            <person name="Flowers D."/>
            <person name="Fotopulos D."/>
            <person name="Glavina T."/>
            <person name="Gomez M."/>
            <person name="Gonzales E."/>
            <person name="Goodstein D."/>
            <person name="Grigoriev I."/>
            <person name="Groza M."/>
            <person name="Hammon N."/>
            <person name="Hawkins T."/>
            <person name="Haydu L."/>
            <person name="Israni S."/>
            <person name="Jett J."/>
            <person name="Kadner K."/>
            <person name="Kimball H."/>
            <person name="Kobayashi A."/>
            <person name="Lopez F."/>
            <person name="Lou Y."/>
            <person name="Martinez D."/>
            <person name="Medina C."/>
            <person name="Morgan J."/>
            <person name="Nandkeshwar R."/>
            <person name="Noonan J.P."/>
            <person name="Pitluck S."/>
            <person name="Pollard M."/>
            <person name="Predki P."/>
            <person name="Priest J."/>
            <person name="Ramirez L."/>
            <person name="Retterer J."/>
            <person name="Rodriguez A."/>
            <person name="Rogers S."/>
            <person name="Salamov A."/>
            <person name="Salazar A."/>
            <person name="Thayer N."/>
            <person name="Tice H."/>
            <person name="Tsai M."/>
            <person name="Ustaszewska A."/>
            <person name="Vo N."/>
            <person name="Wheeler J."/>
            <person name="Wu K."/>
            <person name="Yang J."/>
            <person name="Dickson M."/>
            <person name="Cheng J.-F."/>
            <person name="Eichler E.E."/>
            <person name="Olsen A."/>
            <person name="Pennacchio L.A."/>
            <person name="Rokhsar D.S."/>
            <person name="Richardson P."/>
            <person name="Lucas S.M."/>
            <person name="Myers R.M."/>
            <person name="Rubin E.M."/>
        </authorList>
    </citation>
    <scope>NUCLEOTIDE SEQUENCE [LARGE SCALE GENOMIC DNA]</scope>
</reference>
<reference key="10">
    <citation type="submission" date="2005-07" db="EMBL/GenBank/DDBJ databases">
        <authorList>
            <person name="Mural R.J."/>
            <person name="Istrail S."/>
            <person name="Sutton G.G."/>
            <person name="Florea L."/>
            <person name="Halpern A.L."/>
            <person name="Mobarry C.M."/>
            <person name="Lippert R."/>
            <person name="Walenz B."/>
            <person name="Shatkay H."/>
            <person name="Dew I."/>
            <person name="Miller J.R."/>
            <person name="Flanigan M.J."/>
            <person name="Edwards N.J."/>
            <person name="Bolanos R."/>
            <person name="Fasulo D."/>
            <person name="Halldorsson B.V."/>
            <person name="Hannenhalli S."/>
            <person name="Turner R."/>
            <person name="Yooseph S."/>
            <person name="Lu F."/>
            <person name="Nusskern D.R."/>
            <person name="Shue B.C."/>
            <person name="Zheng X.H."/>
            <person name="Zhong F."/>
            <person name="Delcher A.L."/>
            <person name="Huson D.H."/>
            <person name="Kravitz S.A."/>
            <person name="Mouchard L."/>
            <person name="Reinert K."/>
            <person name="Remington K.A."/>
            <person name="Clark A.G."/>
            <person name="Waterman M.S."/>
            <person name="Eichler E.E."/>
            <person name="Adams M.D."/>
            <person name="Hunkapiller M.W."/>
            <person name="Myers E.W."/>
            <person name="Venter J.C."/>
        </authorList>
    </citation>
    <scope>NUCLEOTIDE SEQUENCE [LARGE SCALE GENOMIC DNA]</scope>
</reference>
<reference key="11">
    <citation type="journal article" date="2004" name="Genome Res.">
        <title>The status, quality, and expansion of the NIH full-length cDNA project: the Mammalian Gene Collection (MGC).</title>
        <authorList>
            <consortium name="The MGC Project Team"/>
        </authorList>
    </citation>
    <scope>NUCLEOTIDE SEQUENCE [LARGE SCALE MRNA] (ISOFORM 1)</scope>
    <source>
        <tissue>Placenta</tissue>
    </source>
</reference>
<reference key="12">
    <citation type="journal article" date="1995" name="J. Biol. Chem.">
        <title>Prolactin receptor antagonists that inhibit the growth of breast cancer cell lines.</title>
        <authorList>
            <person name="Fuh G."/>
            <person name="Wells J.A."/>
        </authorList>
    </citation>
    <scope>NUCLEOTIDE SEQUENCE [MRNA] OF 25-622 (ISOFORM 3)</scope>
    <source>
        <tissue>Mammary carcinoma</tissue>
    </source>
</reference>
<reference key="13">
    <citation type="journal article" date="2005" name="Mol. Endocrinol.">
        <title>Novel association of Vav2 and Nek3 modulates signaling through the human prolactin receptor.</title>
        <authorList>
            <person name="Miller S.L."/>
            <person name="DeMaria J.E."/>
            <person name="Freier D.O."/>
            <person name="Riegel A.M."/>
            <person name="Clevenger C.V."/>
        </authorList>
    </citation>
    <scope>INTERACTION WITH NEK3 AND VAV2</scope>
</reference>
<reference key="14">
    <citation type="journal article" date="2006" name="J. Mol. Biol.">
        <title>Crystal structure and site 1 binding energetics of human placental lactogen.</title>
        <authorList>
            <person name="Walsh S.T."/>
            <person name="Kossiakoff A.A."/>
        </authorList>
    </citation>
    <scope>SUBUNIT</scope>
    <scope>ZINC-BINDING SITES</scope>
</reference>
<reference key="15">
    <citation type="journal article" date="2006" name="Mol. Endocrinol.">
        <title>The imitation switch protein SNF2L regulates steroidogenic acute regulatory protein expression during terminal differentiation of ovarian granulosa cells.</title>
        <authorList>
            <person name="Lazzaro M.A."/>
            <person name="Pepin D."/>
            <person name="Pescador N."/>
            <person name="Murphy B.D."/>
            <person name="Vanderhyden B.C."/>
            <person name="Picketts D.J."/>
        </authorList>
    </citation>
    <scope>INTERACTION WITH SMARCA1</scope>
</reference>
<reference key="16">
    <citation type="journal article" date="2008" name="Proc. Natl. Acad. Sci. U.S.A.">
        <title>Identification of a gain-of-function mutation of the prolactin receptor in women with benign breast tumors.</title>
        <authorList>
            <person name="Bogorad R.L."/>
            <person name="Courtillot C."/>
            <person name="Mestayer C."/>
            <person name="Bernichtein S."/>
            <person name="Harutyunyan L."/>
            <person name="Jomain J.B."/>
            <person name="Bachelot A."/>
            <person name="Kuttenn F."/>
            <person name="Kelly P.A."/>
            <person name="Goffin V."/>
            <person name="Touraine P."/>
            <person name="Bachelot A."/>
            <person name="Belaroussi B."/>
            <person name="Bensimhon J."/>
            <person name="Berdah J."/>
            <person name="Blin M.J."/>
            <person name="Boudinet A."/>
            <person name="Brethon B."/>
            <person name="Bricaire C."/>
            <person name="Caby J."/>
            <person name="Caillaud G."/>
            <person name="Carel J.C."/>
            <person name="Chabbert-Buffet N."/>
            <person name="Charitanski H."/>
            <person name="Chretien C."/>
            <person name="Clough K."/>
            <person name="Courtillot C."/>
            <person name="Delattre G."/>
            <person name="Denys I."/>
            <person name="Desthieux-Ngo K."/>
            <person name="Detoeuf M."/>
            <person name="Dhainault C."/>
            <person name="Duflos C."/>
            <person name="Fiori O."/>
            <person name="Genestie C."/>
            <person name="Gibaud G."/>
            <person name="Gompel A."/>
            <person name="Gracia C."/>
            <person name="Grimard A."/>
            <person name="Hofman C."/>
            <person name="Hofman H."/>
            <person name="Kuttenn F."/>
            <person name="Laki F."/>
            <person name="Lanty C."/>
            <person name="Lefranc J.P."/>
            <person name="Le Frere-Belda M.A."/>
            <person name="Leger D."/>
            <person name="Martinez F."/>
            <person name="May A."/>
            <person name="Meng L."/>
            <person name="Nos C."/>
            <person name="Pelletier D."/>
            <person name="Perrin A."/>
            <person name="Plu-Bureau G."/>
            <person name="Raccah-Tebbeca B."/>
            <person name="Saiovici J.C."/>
            <person name="Salmon R."/>
            <person name="Sibout M."/>
            <person name="Sigal-Zafrani B."/>
            <person name="Thalabard J.C."/>
            <person name="Thibaud E."/>
            <person name="Thoury A."/>
            <person name="Touraine P."/>
            <person name="Triana-Rabi K.B."/>
            <person name="Uzan S."/>
            <person name="Viriot J."/>
            <person name="Yacoub S."/>
        </authorList>
    </citation>
    <scope>VARIANT MFAB LEU-170</scope>
    <scope>CHARACTERIZATION OF VARIANT MFAB LEU-170</scope>
</reference>
<reference key="17">
    <citation type="journal article" date="2013" name="N. Engl. J. Med.">
        <title>Mutant prolactin receptor and familial hyperprolactinemia.</title>
        <authorList>
            <person name="Newey P.J."/>
            <person name="Gorvin C.M."/>
            <person name="Cleland S.J."/>
            <person name="Willberg C.B."/>
            <person name="Bridge M."/>
            <person name="Azharuddin M."/>
            <person name="Drummond R.S."/>
            <person name="van der Merwe P.A."/>
            <person name="Klenerman P."/>
            <person name="Bountra C."/>
            <person name="Thakker R.V."/>
        </authorList>
    </citation>
    <scope>VARIANT HPRL ARG-212</scope>
    <scope>CHARACTERIZATION OF VARIANT HPRL ARG-212</scope>
</reference>
<reference key="18">
    <citation type="journal article" date="1994" name="Nature">
        <title>The X-ray structure of a growth hormone-prolactin receptor complex.</title>
        <authorList>
            <person name="Somers W."/>
            <person name="Ultsch M."/>
            <person name="de Vos A.M."/>
            <person name="Kossiakoff A.A."/>
        </authorList>
    </citation>
    <scope>X-RAY CRYSTALLOGRAPHY (2.9 ANGSTROMS) OF 25-235</scope>
</reference>
<reference key="19">
    <citation type="journal article" date="2008" name="J. Biol. Chem.">
        <title>Crystal structure of a prolactin receptor antagonist bound to the extracellular domain of the prolactin receptor.</title>
        <authorList>
            <person name="Svensson L.A."/>
            <person name="Bondensgaard K."/>
            <person name="Noerskov-Lauritsen L."/>
            <person name="Christensen L."/>
            <person name="Becker P."/>
            <person name="Andersen M.D."/>
            <person name="Maltesen M.J."/>
            <person name="Rand K.D."/>
            <person name="Breinholt J."/>
        </authorList>
    </citation>
    <scope>X-RAY CRYSTALLOGRAPHY (2.5 ANGSTROMS) OF 25-234 IN COMPLEX WITH PRL</scope>
    <scope>SUBUNIT</scope>
    <scope>DISULFIDE BONDS</scope>
</reference>
<protein>
    <recommendedName>
        <fullName>Prolactin receptor</fullName>
        <shortName>PRL-R</shortName>
    </recommendedName>
</protein>
<gene>
    <name type="primary">PRLR</name>
</gene>
<sequence>MKENVASATVFTLLLFLNTCLLNGQLPPGKPEIFKCRSPNKETFTCWWRPGTDGGLPTNYSLTYHREGETLMHECPDYITGGPNSCHFGKQYTSMWRTYIMMVNATNQMGSSFSDELYVDVTYIVQPDPPLELAVEVKQPEDRKPYLWIKWSPPTLIDLKTGWFTLLYEIRLKPEKAAEWEIHFAGQQTEFKILSLHPGQKYLVQVRCKPDHGYWSAWSPATFIQIPSDFTMNDTTVWISVAVLSAVICLIIVWAVALKGYSMVTCIFPPVPGPKIKGFDAHLLEKGKSEELLSALGCQDFPPTSDYEDLLVEYLEVDDSEDQHLMSVHSKEHPSQGMKPTYLDPDTDSGRGSCDSPSLLSEKCEEPQANPSTFYDPEVIEKPENPETTHTWDPQCISMEGKIPYFHAGGSKCSTWPLPQPSQHNPRSSYHNITDVCELAVGPAGAPATLLNEAGKDALKSSQTIKSREEGKATQQREVESFHSETDQDTPWLLPQEKTPFGSAKPLDYVEIHKVNKDGALSLLPKQRENSGKPKKPGTPENNKEYAKVSGVMDNNILVLVPDPHAKNVACFEESAKEAPPSLEQNQAEKALANFTATSSKCRLQLGGLDYLDPACFTHSFH</sequence>
<evidence type="ECO:0000255" key="1"/>
<evidence type="ECO:0000255" key="2">
    <source>
        <dbReference type="PROSITE-ProRule" id="PRU00316"/>
    </source>
</evidence>
<evidence type="ECO:0000256" key="3">
    <source>
        <dbReference type="SAM" id="MobiDB-lite"/>
    </source>
</evidence>
<evidence type="ECO:0000269" key="4">
    <source>
    </source>
</evidence>
<evidence type="ECO:0000269" key="5">
    <source>
    </source>
</evidence>
<evidence type="ECO:0000269" key="6">
    <source>
    </source>
</evidence>
<evidence type="ECO:0000269" key="7">
    <source>
    </source>
</evidence>
<evidence type="ECO:0000269" key="8">
    <source>
    </source>
</evidence>
<evidence type="ECO:0000269" key="9">
    <source>
    </source>
</evidence>
<evidence type="ECO:0000269" key="10">
    <source>
    </source>
</evidence>
<evidence type="ECO:0000269" key="11">
    <source>
    </source>
</evidence>
<evidence type="ECO:0000269" key="12">
    <source>
    </source>
</evidence>
<evidence type="ECO:0000303" key="13">
    <source>
    </source>
</evidence>
<evidence type="ECO:0000303" key="14">
    <source>
    </source>
</evidence>
<evidence type="ECO:0000303" key="15">
    <source>
    </source>
</evidence>
<evidence type="ECO:0000303" key="16">
    <source>
    </source>
</evidence>
<evidence type="ECO:0000303" key="17">
    <source>
    </source>
</evidence>
<evidence type="ECO:0000303" key="18">
    <source>
    </source>
</evidence>
<evidence type="ECO:0000305" key="19"/>
<evidence type="ECO:0007829" key="20">
    <source>
        <dbReference type="PDB" id="2LFG"/>
    </source>
</evidence>
<evidence type="ECO:0007829" key="21">
    <source>
        <dbReference type="PDB" id="2N7I"/>
    </source>
</evidence>
<evidence type="ECO:0007829" key="22">
    <source>
        <dbReference type="PDB" id="3N06"/>
    </source>
</evidence>
<evidence type="ECO:0007829" key="23">
    <source>
        <dbReference type="PDB" id="3N0P"/>
    </source>
</evidence>
<evidence type="ECO:0007829" key="24">
    <source>
        <dbReference type="PDB" id="3NCC"/>
    </source>
</evidence>
<evidence type="ECO:0007829" key="25">
    <source>
        <dbReference type="PDB" id="4I18"/>
    </source>
</evidence>
<feature type="signal peptide">
    <location>
        <begin position="1"/>
        <end position="24"/>
    </location>
</feature>
<feature type="chain" id="PRO_0000010977" description="Prolactin receptor">
    <location>
        <begin position="25"/>
        <end position="622"/>
    </location>
</feature>
<feature type="topological domain" description="Extracellular" evidence="1">
    <location>
        <begin position="25"/>
        <end position="234"/>
    </location>
</feature>
<feature type="transmembrane region" description="Helical" evidence="1">
    <location>
        <begin position="235"/>
        <end position="258"/>
    </location>
</feature>
<feature type="topological domain" description="Cytoplasmic" evidence="1">
    <location>
        <begin position="259"/>
        <end position="622"/>
    </location>
</feature>
<feature type="domain" description="Fibronectin type-III 1" evidence="2">
    <location>
        <begin position="27"/>
        <end position="128"/>
    </location>
</feature>
<feature type="domain" description="Fibronectin type-III 2" evidence="2">
    <location>
        <begin position="129"/>
        <end position="229"/>
    </location>
</feature>
<feature type="region of interest" description="Disordered" evidence="3">
    <location>
        <begin position="326"/>
        <end position="378"/>
    </location>
</feature>
<feature type="region of interest" description="Disordered" evidence="3">
    <location>
        <begin position="461"/>
        <end position="505"/>
    </location>
</feature>
<feature type="region of interest" description="Disordered" evidence="3">
    <location>
        <begin position="520"/>
        <end position="545"/>
    </location>
</feature>
<feature type="short sequence motif" description="WSXWS motif">
    <location>
        <begin position="215"/>
        <end position="219"/>
    </location>
</feature>
<feature type="short sequence motif" description="Box 1 motif">
    <location>
        <begin position="267"/>
        <end position="275"/>
    </location>
</feature>
<feature type="compositionally biased region" description="Basic and acidic residues" evidence="3">
    <location>
        <begin position="466"/>
        <end position="486"/>
    </location>
</feature>
<feature type="binding site">
    <location>
        <position position="211"/>
    </location>
    <ligand>
        <name>Zn(2+)</name>
        <dbReference type="ChEBI" id="CHEBI:29105"/>
    </ligand>
</feature>
<feature type="binding site">
    <location>
        <position position="212"/>
    </location>
    <ligand>
        <name>Zn(2+)</name>
        <dbReference type="ChEBI" id="CHEBI:29105"/>
    </ligand>
</feature>
<feature type="glycosylation site" description="N-linked (GlcNAc...) asparagine" evidence="1">
    <location>
        <position position="59"/>
    </location>
</feature>
<feature type="glycosylation site" description="N-linked (GlcNAc...) asparagine" evidence="1">
    <location>
        <position position="104"/>
    </location>
</feature>
<feature type="glycosylation site" description="N-linked (GlcNAc...) asparagine" evidence="1">
    <location>
        <position position="233"/>
    </location>
</feature>
<feature type="disulfide bond" evidence="9">
    <location>
        <begin position="36"/>
        <end position="46"/>
    </location>
</feature>
<feature type="disulfide bond" evidence="9">
    <location>
        <begin position="75"/>
        <end position="86"/>
    </location>
</feature>
<feature type="splice variant" id="VSP_026531" description="In isoform 8." evidence="16">
    <location>
        <begin position="1"/>
        <end position="71"/>
    </location>
</feature>
<feature type="splice variant" id="VSP_001720" description="In isoform 2." evidence="15">
    <location>
        <begin position="24"/>
        <end position="124"/>
    </location>
</feature>
<feature type="splice variant" id="VSP_026532" description="In isoform 7." evidence="16">
    <original>DFTMNDTTVWISVAVLSAVICLIIVWAVALKGYSMVTCIF</original>
    <variation>GDPLMLGASHYKNLKSYRPRKISSQGRLAVFTKATLTTVQ</variation>
    <location>
        <begin position="229"/>
        <end position="268"/>
    </location>
</feature>
<feature type="splice variant" id="VSP_012620" description="In isoform 3." evidence="18">
    <original>DF</original>
    <variation>AW</variation>
    <location>
        <begin position="229"/>
        <end position="230"/>
    </location>
</feature>
<feature type="splice variant" id="VSP_012621" description="In isoform 3." evidence="18">
    <location>
        <begin position="231"/>
        <end position="622"/>
    </location>
</feature>
<feature type="splice variant" id="VSP_026533" description="In isoform 7." evidence="16">
    <location>
        <begin position="269"/>
        <end position="622"/>
    </location>
</feature>
<feature type="splice variant" id="VSP_047882" description="In isoform 9." evidence="17">
    <original>KGKSEELLSALGCQDFPPTSDYED</original>
    <variation>DRLCTPGRCCVSTGLTDLDYSCST</variation>
    <location>
        <begin position="286"/>
        <end position="309"/>
    </location>
</feature>
<feature type="splice variant" id="VSP_026534" description="In isoform 6 and isoform 8." evidence="14 16">
    <original>KGK</original>
    <variation>VTP</variation>
    <location>
        <begin position="286"/>
        <end position="288"/>
    </location>
</feature>
<feature type="splice variant" id="VSP_026535" description="In isoform 6 and isoform 8." evidence="14 16">
    <location>
        <begin position="289"/>
        <end position="622"/>
    </location>
</feature>
<feature type="splice variant" id="VSP_047883" description="In isoform 9." evidence="17">
    <location>
        <begin position="310"/>
        <end position="622"/>
    </location>
</feature>
<feature type="splice variant" id="VSP_026536" description="In isoform 5." evidence="13">
    <original>GMKPTYLDPDTDS</original>
    <variation>EREQRQAQEARDS</variation>
    <location>
        <begin position="337"/>
        <end position="349"/>
    </location>
</feature>
<feature type="splice variant" id="VSP_026537" description="In isoform 4." evidence="14 16">
    <original>MKPTYLDPDTDSGRGSCDSPSLLSEKCEEPQANPSTFYD</original>
    <variation>DPLMLGASHYKNLKSYRPRKISSQGRLAVFTKATLTTVQ</variation>
    <location>
        <begin position="338"/>
        <end position="376"/>
    </location>
</feature>
<feature type="splice variant" id="VSP_026538" description="In isoform 5." evidence="13">
    <location>
        <begin position="350"/>
        <end position="622"/>
    </location>
</feature>
<feature type="splice variant" id="VSP_026539" description="In isoform 4." evidence="14 16">
    <location>
        <begin position="377"/>
        <end position="622"/>
    </location>
</feature>
<feature type="sequence variant" id="VAR_049172" description="In dbSNP:rs2228482.">
    <original>I</original>
    <variation>V</variation>
    <location>
        <position position="100"/>
    </location>
</feature>
<feature type="sequence variant" id="VAR_070894" description="In MFAB; confers constitutive activity; dbSNP:rs72478580." evidence="10">
    <original>I</original>
    <variation>L</variation>
    <location>
        <position position="170"/>
    </location>
</feature>
<feature type="sequence variant" id="VAR_070895" description="In HPRL; loss of function; dbSNP:rs398122522." evidence="12">
    <original>H</original>
    <variation>R</variation>
    <location>
        <position position="212"/>
    </location>
</feature>
<feature type="strand" evidence="22">
    <location>
        <begin position="32"/>
        <end position="42"/>
    </location>
</feature>
<feature type="strand" evidence="22">
    <location>
        <begin position="44"/>
        <end position="49"/>
    </location>
</feature>
<feature type="strand" evidence="22">
    <location>
        <begin position="52"/>
        <end position="54"/>
    </location>
</feature>
<feature type="strand" evidence="22">
    <location>
        <begin position="58"/>
        <end position="66"/>
    </location>
</feature>
<feature type="turn" evidence="24">
    <location>
        <begin position="67"/>
        <end position="69"/>
    </location>
</feature>
<feature type="strand" evidence="22">
    <location>
        <begin position="85"/>
        <end position="88"/>
    </location>
</feature>
<feature type="helix" evidence="22">
    <location>
        <begin position="90"/>
        <end position="92"/>
    </location>
</feature>
<feature type="strand" evidence="22">
    <location>
        <begin position="95"/>
        <end position="97"/>
    </location>
</feature>
<feature type="strand" evidence="22">
    <location>
        <begin position="99"/>
        <end position="107"/>
    </location>
</feature>
<feature type="strand" evidence="22">
    <location>
        <begin position="110"/>
        <end position="113"/>
    </location>
</feature>
<feature type="strand" evidence="22">
    <location>
        <begin position="117"/>
        <end position="119"/>
    </location>
</feature>
<feature type="helix" evidence="22">
    <location>
        <begin position="121"/>
        <end position="123"/>
    </location>
</feature>
<feature type="strand" evidence="22">
    <location>
        <begin position="131"/>
        <end position="138"/>
    </location>
</feature>
<feature type="strand" evidence="22">
    <location>
        <begin position="141"/>
        <end position="143"/>
    </location>
</feature>
<feature type="strand" evidence="22">
    <location>
        <begin position="146"/>
        <end position="152"/>
    </location>
</feature>
<feature type="strand" evidence="20">
    <location>
        <begin position="155"/>
        <end position="157"/>
    </location>
</feature>
<feature type="strand" evidence="23">
    <location>
        <begin position="162"/>
        <end position="164"/>
    </location>
</feature>
<feature type="strand" evidence="22">
    <location>
        <begin position="166"/>
        <end position="173"/>
    </location>
</feature>
<feature type="strand" evidence="22">
    <location>
        <begin position="181"/>
        <end position="186"/>
    </location>
</feature>
<feature type="strand" evidence="22">
    <location>
        <begin position="189"/>
        <end position="193"/>
    </location>
</feature>
<feature type="strand" evidence="22">
    <location>
        <begin position="201"/>
        <end position="213"/>
    </location>
</feature>
<feature type="strand" evidence="22">
    <location>
        <begin position="222"/>
        <end position="225"/>
    </location>
</feature>
<feature type="helix" evidence="25">
    <location>
        <begin position="230"/>
        <end position="232"/>
    </location>
</feature>
<feature type="helix" evidence="21">
    <location>
        <begin position="234"/>
        <end position="254"/>
    </location>
</feature>
<feature type="turn" evidence="21">
    <location>
        <begin position="255"/>
        <end position="257"/>
    </location>
</feature>
<feature type="strand" evidence="21">
    <location>
        <begin position="258"/>
        <end position="262"/>
    </location>
</feature>
<comment type="function">
    <text evidence="5 11">This is a receptor for the anterior pituitary hormone prolactin (PRL). Acts as a prosurvival factor for spermatozoa by inhibiting sperm capacitation through suppression of SRC kinase activation and stimulation of AKT. Isoform 4 is unable to transduce prolactin signaling. Isoform 6 is unable to transduce prolactin signaling.</text>
</comment>
<comment type="subunit">
    <text evidence="4 6 7 8 9">Homodimer upon hormone binding. Interacts with SMARCA1. Interacts with GH1. Interacts with CSH. Interacts with NEK3 and VAV2 and this interaction is prolactin-dependent.</text>
</comment>
<comment type="interaction">
    <interactant intactId="EBI-476182">
        <id>P16471</id>
    </interactant>
    <interactant intactId="EBI-8503746">
        <id>Q9Y5U4</id>
        <label>INSIG2</label>
    </interactant>
    <organismsDiffer>false</organismsDiffer>
    <experiments>3</experiments>
</comment>
<comment type="interaction">
    <interactant intactId="EBI-476182">
        <id>P16471</id>
    </interactant>
    <interactant intactId="EBI-11721828">
        <id>Q8IY26</id>
        <label>PLPP6</label>
    </interactant>
    <organismsDiffer>false</organismsDiffer>
    <experiments>3</experiments>
</comment>
<comment type="interaction">
    <interactant intactId="EBI-476182">
        <id>P16471</id>
    </interactant>
    <interactant intactId="EBI-347088">
        <id>P63104</id>
        <label>YWHAZ</label>
    </interactant>
    <organismsDiffer>false</organismsDiffer>
    <experiments>3</experiments>
</comment>
<comment type="interaction">
    <interactant intactId="EBI-15968347">
        <id>P16471-1</id>
    </interactant>
    <interactant intactId="EBI-6903064">
        <id>P01236</id>
        <label>PRL</label>
    </interactant>
    <organismsDiffer>false</organismsDiffer>
    <experiments>2</experiments>
</comment>
<comment type="interaction">
    <interactant intactId="EBI-6903057">
        <id>P16471-7</id>
    </interactant>
    <interactant intactId="EBI-6903064">
        <id>P01236</id>
        <label>PRL</label>
    </interactant>
    <organismsDiffer>false</organismsDiffer>
    <experiments>4</experiments>
</comment>
<comment type="subcellular location">
    <subcellularLocation>
        <location evidence="4 5">Membrane</location>
        <topology evidence="4 5">Single-pass type I membrane protein</topology>
    </subcellularLocation>
</comment>
<comment type="subcellular location">
    <molecule>Isoform 7</molecule>
    <subcellularLocation>
        <location>Secreted</location>
    </subcellularLocation>
</comment>
<comment type="alternative products">
    <event type="alternative splicing"/>
    <isoform>
        <id>P16471-1</id>
        <name>1</name>
        <sequence type="displayed"/>
    </isoform>
    <isoform>
        <id>P16471-2</id>
        <name>2</name>
        <name>Delta-S1</name>
        <sequence type="described" ref="VSP_001720"/>
    </isoform>
    <isoform>
        <id>P16471-3</id>
        <name>3</name>
        <sequence type="described" ref="VSP_012620 VSP_012621"/>
    </isoform>
    <isoform>
        <id>P16471-4</id>
        <name>4</name>
        <name>SF1a</name>
        <name>Short form 1a</name>
        <sequence type="described" ref="VSP_026537 VSP_026539"/>
    </isoform>
    <isoform>
        <id>P16471-5</id>
        <name>5</name>
        <name>Intermediate</name>
        <sequence type="described" ref="VSP_026536 VSP_026538"/>
    </isoform>
    <isoform>
        <id>P16471-6</id>
        <name>6</name>
        <name>SF1b</name>
        <name>Short form 1b</name>
        <sequence type="described" ref="VSP_026534 VSP_026535"/>
    </isoform>
    <isoform>
        <id>P16471-7</id>
        <name>7</name>
        <name>Delta 7/11</name>
        <sequence type="described" ref="VSP_026532 VSP_026533"/>
    </isoform>
    <isoform>
        <id>P16471-8</id>
        <name>8</name>
        <name>Delta 4-SF1b</name>
        <sequence type="described" ref="VSP_026531 VSP_026534 VSP_026535"/>
    </isoform>
    <isoform>
        <id>P16471-9</id>
        <name>9</name>
        <name>SF1c</name>
        <name>Short form 1c</name>
        <sequence type="described" ref="VSP_047882 VSP_047883"/>
    </isoform>
</comment>
<comment type="tissue specificity">
    <text evidence="4 5">Expressed in breast, placenta, kidney, liver and pancreas.</text>
</comment>
<comment type="domain">
    <text>The WSXWS motif appears to be necessary for proper protein folding and thereby efficient intracellular transport and cell-surface receptor binding.</text>
</comment>
<comment type="domain">
    <text>The box 1 motif is required for JAK interaction and/or activation.</text>
</comment>
<comment type="disease" evidence="10">
    <disease id="DI-03981">
        <name>Multiple fibroadenomas of the breast</name>
        <acronym>MFAB</acronym>
        <description>A benign breast disease marked by lobuloalveolar growth with abnormally high proliferation of the epithelium, and characterized by the presence of more than 3 fibroadenomas in one breast. Fibroadenomas are adenomas containing fibrous tissue.</description>
        <dbReference type="MIM" id="615554"/>
    </disease>
    <text>The disease is caused by variants affecting the gene represented in this entry.</text>
</comment>
<comment type="disease" evidence="12">
    <disease id="DI-03975">
        <name>Hyperprolactinemia</name>
        <acronym>HPRL</acronym>
        <description>A disorder characterized by increased levels of prolactin in the blood not associated with gestation or the puerperium. HPRL may result in infertility, hypogonadism, and galactorrhea.</description>
        <dbReference type="MIM" id="615555"/>
    </disease>
    <text>The disease is caused by variants affecting the gene represented in this entry.</text>
</comment>
<comment type="miscellaneous">
    <molecule>Isoform 3</molecule>
    <text evidence="19">Soluble isoform that appears specific for the BT-474 breast cancer cell line.</text>
</comment>
<comment type="miscellaneous">
    <molecule>Isoform 4</molecule>
    <text evidence="19">Includes exon 11. Does not transduce prolactin signaling.</text>
</comment>
<comment type="miscellaneous">
    <molecule>Isoform 5</molecule>
    <text evidence="19">Produced by deletion of part of exon 10 and frameshift.</text>
</comment>
<comment type="miscellaneous">
    <molecule>Isoform 6</molecule>
    <text evidence="19">Does not transduce prolactin signaling.</text>
</comment>
<comment type="miscellaneous">
    <molecule>Isoform 7</molecule>
    <text evidence="19">Splices from exon 7 to exon 11.</text>
</comment>
<comment type="miscellaneous">
    <molecule>Isoform 8</molecule>
    <text evidence="19">SF1b with deletion of exon 4. May be produced at very low levels due to a premature stop codon in the mRNA, leading to nonsense-mediated mRNA decay.</text>
</comment>
<comment type="similarity">
    <text evidence="19">Belongs to the type I cytokine receptor family. Type 1 subfamily.</text>
</comment>
<comment type="online information" name="Atlas of Genetics and Cytogenetics in Oncology and Haematology">
    <link uri="https://atlasgeneticsoncology.org/gene/42891/PRLR"/>
</comment>
<accession>P16471</accession>
<accession>B2R882</accession>
<accession>D1MDP1</accession>
<accession>Q16354</accession>
<accession>Q8TD75</accession>
<accession>Q8TD78</accession>
<accession>Q96P35</accession>
<accession>Q96P36</accession>
<accession>Q9BX87</accession>
<accession>Q9UHJ5</accession>
<organism>
    <name type="scientific">Homo sapiens</name>
    <name type="common">Human</name>
    <dbReference type="NCBI Taxonomy" id="9606"/>
    <lineage>
        <taxon>Eukaryota</taxon>
        <taxon>Metazoa</taxon>
        <taxon>Chordata</taxon>
        <taxon>Craniata</taxon>
        <taxon>Vertebrata</taxon>
        <taxon>Euteleostomi</taxon>
        <taxon>Mammalia</taxon>
        <taxon>Eutheria</taxon>
        <taxon>Euarchontoglires</taxon>
        <taxon>Primates</taxon>
        <taxon>Haplorrhini</taxon>
        <taxon>Catarrhini</taxon>
        <taxon>Hominidae</taxon>
        <taxon>Homo</taxon>
    </lineage>
</organism>
<keyword id="KW-0002">3D-structure</keyword>
<keyword id="KW-0025">Alternative splicing</keyword>
<keyword id="KW-0225">Disease variant</keyword>
<keyword id="KW-1015">Disulfide bond</keyword>
<keyword id="KW-0325">Glycoprotein</keyword>
<keyword id="KW-0472">Membrane</keyword>
<keyword id="KW-0479">Metal-binding</keyword>
<keyword id="KW-1267">Proteomics identification</keyword>
<keyword id="KW-0675">Receptor</keyword>
<keyword id="KW-1185">Reference proteome</keyword>
<keyword id="KW-0677">Repeat</keyword>
<keyword id="KW-0964">Secreted</keyword>
<keyword id="KW-0732">Signal</keyword>
<keyword id="KW-0812">Transmembrane</keyword>
<keyword id="KW-1133">Transmembrane helix</keyword>
<keyword id="KW-0862">Zinc</keyword>
<dbReference type="EMBL" id="M31661">
    <property type="protein sequence ID" value="AAA60174.1"/>
    <property type="molecule type" value="mRNA"/>
</dbReference>
<dbReference type="EMBL" id="AF166329">
    <property type="protein sequence ID" value="AAD49855.1"/>
    <property type="molecule type" value="mRNA"/>
</dbReference>
<dbReference type="EMBL" id="AF091870">
    <property type="protein sequence ID" value="AAD32032.1"/>
    <property type="molecule type" value="Genomic_DNA"/>
</dbReference>
<dbReference type="EMBL" id="AF091863">
    <property type="protein sequence ID" value="AAD32032.1"/>
    <property type="status" value="JOINED"/>
    <property type="molecule type" value="Genomic_DNA"/>
</dbReference>
<dbReference type="EMBL" id="AF091864">
    <property type="protein sequence ID" value="AAD32032.1"/>
    <property type="status" value="JOINED"/>
    <property type="molecule type" value="Genomic_DNA"/>
</dbReference>
<dbReference type="EMBL" id="AF091865">
    <property type="protein sequence ID" value="AAD32032.1"/>
    <property type="status" value="JOINED"/>
    <property type="molecule type" value="Genomic_DNA"/>
</dbReference>
<dbReference type="EMBL" id="AF091866">
    <property type="protein sequence ID" value="AAD32032.1"/>
    <property type="status" value="JOINED"/>
    <property type="molecule type" value="Genomic_DNA"/>
</dbReference>
<dbReference type="EMBL" id="AF091867">
    <property type="protein sequence ID" value="AAD32032.1"/>
    <property type="status" value="JOINED"/>
    <property type="molecule type" value="Genomic_DNA"/>
</dbReference>
<dbReference type="EMBL" id="AF091868">
    <property type="protein sequence ID" value="AAD32032.1"/>
    <property type="status" value="JOINED"/>
    <property type="molecule type" value="Genomic_DNA"/>
</dbReference>
<dbReference type="EMBL" id="AF091869">
    <property type="protein sequence ID" value="AAD32032.1"/>
    <property type="status" value="JOINED"/>
    <property type="molecule type" value="Genomic_DNA"/>
</dbReference>
<dbReference type="EMBL" id="AF349939">
    <property type="protein sequence ID" value="AAK32703.1"/>
    <property type="molecule type" value="mRNA"/>
</dbReference>
<dbReference type="EMBL" id="AF416618">
    <property type="protein sequence ID" value="AAL23914.1"/>
    <property type="molecule type" value="mRNA"/>
</dbReference>
<dbReference type="EMBL" id="AF416619">
    <property type="protein sequence ID" value="AAL23915.1"/>
    <property type="molecule type" value="mRNA"/>
</dbReference>
<dbReference type="EMBL" id="AF492470">
    <property type="protein sequence ID" value="AAM18048.1"/>
    <property type="molecule type" value="mRNA"/>
</dbReference>
<dbReference type="EMBL" id="AF493069">
    <property type="protein sequence ID" value="AAM11661.1"/>
    <property type="molecule type" value="mRNA"/>
</dbReference>
<dbReference type="EMBL" id="GU133399">
    <property type="protein sequence ID" value="ACZ04321.1"/>
    <property type="molecule type" value="mRNA"/>
</dbReference>
<dbReference type="EMBL" id="AK313270">
    <property type="protein sequence ID" value="BAG36079.1"/>
    <property type="molecule type" value="mRNA"/>
</dbReference>
<dbReference type="EMBL" id="AC010368">
    <property type="status" value="NOT_ANNOTATED_CDS"/>
    <property type="molecule type" value="Genomic_DNA"/>
</dbReference>
<dbReference type="EMBL" id="AC091851">
    <property type="status" value="NOT_ANNOTATED_CDS"/>
    <property type="molecule type" value="Genomic_DNA"/>
</dbReference>
<dbReference type="EMBL" id="CH471119">
    <property type="protein sequence ID" value="EAW55919.1"/>
    <property type="molecule type" value="Genomic_DNA"/>
</dbReference>
<dbReference type="EMBL" id="BC059392">
    <property type="protein sequence ID" value="AAH59392.1"/>
    <property type="molecule type" value="mRNA"/>
</dbReference>
<dbReference type="EMBL" id="S78505">
    <property type="protein sequence ID" value="AAB34470.1"/>
    <property type="molecule type" value="mRNA"/>
</dbReference>
<dbReference type="CCDS" id="CCDS3909.1">
    <molecule id="P16471-1"/>
</dbReference>
<dbReference type="CCDS" id="CCDS56358.1">
    <molecule id="P16471-2"/>
</dbReference>
<dbReference type="CCDS" id="CCDS56359.1">
    <molecule id="P16471-7"/>
</dbReference>
<dbReference type="CCDS" id="CCDS56360.1">
    <molecule id="P16471-6"/>
</dbReference>
<dbReference type="CCDS" id="CCDS56361.1">
    <molecule id="P16471-4"/>
</dbReference>
<dbReference type="CCDS" id="CCDS56362.1">
    <molecule id="P16471-5"/>
</dbReference>
<dbReference type="PIR" id="A40144">
    <property type="entry name" value="A40144"/>
</dbReference>
<dbReference type="PIR" id="A59405">
    <property type="entry name" value="A59405"/>
</dbReference>
<dbReference type="PIR" id="B59405">
    <property type="entry name" value="B59405"/>
</dbReference>
<dbReference type="RefSeq" id="NP_000940.1">
    <molecule id="P16471-1"/>
    <property type="nucleotide sequence ID" value="NM_000949.7"/>
</dbReference>
<dbReference type="RefSeq" id="NP_001191243.1">
    <molecule id="P16471-2"/>
    <property type="nucleotide sequence ID" value="NM_001204314.2"/>
</dbReference>
<dbReference type="RefSeq" id="NP_001191244.1">
    <molecule id="P16471-5"/>
    <property type="nucleotide sequence ID" value="NM_001204315.1"/>
</dbReference>
<dbReference type="RefSeq" id="NP_001191245.1">
    <molecule id="P16471-4"/>
    <property type="nucleotide sequence ID" value="NM_001204316.1"/>
</dbReference>
<dbReference type="RefSeq" id="NP_001191246.1">
    <molecule id="P16471-6"/>
    <property type="nucleotide sequence ID" value="NM_001204317.1"/>
</dbReference>
<dbReference type="RefSeq" id="NP_001191247.1">
    <molecule id="P16471-7"/>
    <property type="nucleotide sequence ID" value="NM_001204318.1"/>
</dbReference>
<dbReference type="RefSeq" id="XP_006714547.1">
    <molecule id="P16471-1"/>
    <property type="nucleotide sequence ID" value="XM_006714484.3"/>
</dbReference>
<dbReference type="RefSeq" id="XP_011512370.1">
    <molecule id="P16471-1"/>
    <property type="nucleotide sequence ID" value="XM_011514068.3"/>
</dbReference>
<dbReference type="RefSeq" id="XP_011512371.1">
    <property type="nucleotide sequence ID" value="XM_011514069.2"/>
</dbReference>
<dbReference type="RefSeq" id="XP_016865135.1">
    <property type="nucleotide sequence ID" value="XM_017009646.1"/>
</dbReference>
<dbReference type="RefSeq" id="XP_047273344.1">
    <molecule id="P16471-1"/>
    <property type="nucleotide sequence ID" value="XM_047417388.1"/>
</dbReference>
<dbReference type="RefSeq" id="XP_047273346.1">
    <molecule id="P16471-1"/>
    <property type="nucleotide sequence ID" value="XM_047417390.1"/>
</dbReference>
<dbReference type="RefSeq" id="XP_054208913.1">
    <molecule id="P16471-1"/>
    <property type="nucleotide sequence ID" value="XM_054352938.1"/>
</dbReference>
<dbReference type="RefSeq" id="XP_054208914.1">
    <molecule id="P16471-1"/>
    <property type="nucleotide sequence ID" value="XM_054352939.1"/>
</dbReference>
<dbReference type="RefSeq" id="XP_054208915.1">
    <molecule id="P16471-1"/>
    <property type="nucleotide sequence ID" value="XM_054352940.1"/>
</dbReference>
<dbReference type="PDB" id="1BP3">
    <property type="method" value="X-ray"/>
    <property type="resolution" value="2.90 A"/>
    <property type="chains" value="B=25-235"/>
</dbReference>
<dbReference type="PDB" id="2LFG">
    <property type="method" value="NMR"/>
    <property type="chains" value="A=123-234"/>
</dbReference>
<dbReference type="PDB" id="2N7I">
    <property type="method" value="NMR"/>
    <property type="chains" value="A=230-264"/>
</dbReference>
<dbReference type="PDB" id="3D48">
    <property type="method" value="X-ray"/>
    <property type="resolution" value="2.50 A"/>
    <property type="chains" value="R=25-234"/>
</dbReference>
<dbReference type="PDB" id="3MZG">
    <property type="method" value="X-ray"/>
    <property type="resolution" value="2.10 A"/>
    <property type="chains" value="B=26-234"/>
</dbReference>
<dbReference type="PDB" id="3N06">
    <property type="method" value="X-ray"/>
    <property type="resolution" value="2.00 A"/>
    <property type="chains" value="B=26-234"/>
</dbReference>
<dbReference type="PDB" id="3N0P">
    <property type="method" value="X-ray"/>
    <property type="resolution" value="2.10 A"/>
    <property type="chains" value="B=26-234"/>
</dbReference>
<dbReference type="PDB" id="3NCB">
    <property type="method" value="X-ray"/>
    <property type="resolution" value="2.10 A"/>
    <property type="chains" value="B=26-234"/>
</dbReference>
<dbReference type="PDB" id="3NCC">
    <property type="method" value="X-ray"/>
    <property type="resolution" value="2.50 A"/>
    <property type="chains" value="B=26-234"/>
</dbReference>
<dbReference type="PDB" id="3NCE">
    <property type="method" value="X-ray"/>
    <property type="resolution" value="2.00 A"/>
    <property type="chains" value="B=26-234"/>
</dbReference>
<dbReference type="PDB" id="3NCF">
    <property type="method" value="X-ray"/>
    <property type="resolution" value="2.80 A"/>
    <property type="chains" value="B=26-234"/>
</dbReference>
<dbReference type="PDB" id="4I18">
    <property type="method" value="X-ray"/>
    <property type="resolution" value="3.24 A"/>
    <property type="chains" value="C/R=25-235"/>
</dbReference>
<dbReference type="PDBsum" id="1BP3"/>
<dbReference type="PDBsum" id="2LFG"/>
<dbReference type="PDBsum" id="2N7I"/>
<dbReference type="PDBsum" id="3D48"/>
<dbReference type="PDBsum" id="3MZG"/>
<dbReference type="PDBsum" id="3N06"/>
<dbReference type="PDBsum" id="3N0P"/>
<dbReference type="PDBsum" id="3NCB"/>
<dbReference type="PDBsum" id="3NCC"/>
<dbReference type="PDBsum" id="3NCE"/>
<dbReference type="PDBsum" id="3NCF"/>
<dbReference type="PDBsum" id="4I18"/>
<dbReference type="BMRB" id="P16471"/>
<dbReference type="SMR" id="P16471"/>
<dbReference type="BioGRID" id="111603">
    <property type="interactions" value="17"/>
</dbReference>
<dbReference type="CORUM" id="P16471"/>
<dbReference type="DIP" id="DIP-288N"/>
<dbReference type="ELM" id="P16471"/>
<dbReference type="FunCoup" id="P16471">
    <property type="interactions" value="1063"/>
</dbReference>
<dbReference type="IntAct" id="P16471">
    <property type="interactions" value="8"/>
</dbReference>
<dbReference type="MINT" id="P16471"/>
<dbReference type="STRING" id="9606.ENSP00000482954"/>
<dbReference type="BindingDB" id="P16471"/>
<dbReference type="ChEMBL" id="CHEMBL5588"/>
<dbReference type="DrugBank" id="DB16220">
    <property type="generic name" value="Lonapegsomatropin"/>
</dbReference>
<dbReference type="DrugBank" id="DB00052">
    <property type="generic name" value="Somatotropin"/>
</dbReference>
<dbReference type="TCDB" id="8.A.152.2.8">
    <property type="family name" value="the interleukin receptor (ilr) family"/>
</dbReference>
<dbReference type="GlyCosmos" id="P16471">
    <property type="glycosylation" value="3 sites, No reported glycans"/>
</dbReference>
<dbReference type="GlyGen" id="P16471">
    <property type="glycosylation" value="3 sites"/>
</dbReference>
<dbReference type="iPTMnet" id="P16471"/>
<dbReference type="PhosphoSitePlus" id="P16471"/>
<dbReference type="BioMuta" id="PRLR"/>
<dbReference type="DMDM" id="130321"/>
<dbReference type="MassIVE" id="P16471"/>
<dbReference type="PaxDb" id="9606-ENSP00000482954"/>
<dbReference type="PeptideAtlas" id="P16471"/>
<dbReference type="ProteomicsDB" id="12725"/>
<dbReference type="ProteomicsDB" id="53366">
    <molecule id="P16471-1"/>
</dbReference>
<dbReference type="ProteomicsDB" id="53367">
    <molecule id="P16471-2"/>
</dbReference>
<dbReference type="ProteomicsDB" id="53368">
    <molecule id="P16471-3"/>
</dbReference>
<dbReference type="ProteomicsDB" id="53369">
    <molecule id="P16471-4"/>
</dbReference>
<dbReference type="ProteomicsDB" id="53370">
    <molecule id="P16471-5"/>
</dbReference>
<dbReference type="ProteomicsDB" id="53371">
    <molecule id="P16471-6"/>
</dbReference>
<dbReference type="ProteomicsDB" id="53372">
    <molecule id="P16471-7"/>
</dbReference>
<dbReference type="ProteomicsDB" id="53373">
    <molecule id="P16471-8"/>
</dbReference>
<dbReference type="ABCD" id="P16471">
    <property type="antibodies" value="50 sequenced antibodies"/>
</dbReference>
<dbReference type="Antibodypedia" id="10116">
    <property type="antibodies" value="964 antibodies from 38 providers"/>
</dbReference>
<dbReference type="DNASU" id="5618"/>
<dbReference type="Ensembl" id="ENST00000231423.7">
    <molecule id="P16471-4"/>
    <property type="protein sequence ID" value="ENSP00000231423.3"/>
    <property type="gene ID" value="ENSG00000113494.17"/>
</dbReference>
<dbReference type="Ensembl" id="ENST00000310101.9">
    <molecule id="P16471-5"/>
    <property type="protein sequence ID" value="ENSP00000309008.5"/>
    <property type="gene ID" value="ENSG00000113494.17"/>
</dbReference>
<dbReference type="Ensembl" id="ENST00000348262.7">
    <molecule id="P16471-7"/>
    <property type="protein sequence ID" value="ENSP00000311613.3"/>
    <property type="gene ID" value="ENSG00000113494.17"/>
</dbReference>
<dbReference type="Ensembl" id="ENST00000509140.5">
    <molecule id="P16471-6"/>
    <property type="protein sequence ID" value="ENSP00000425300.2"/>
    <property type="gene ID" value="ENSG00000113494.17"/>
</dbReference>
<dbReference type="Ensembl" id="ENST00000511486.5">
    <molecule id="P16471-2"/>
    <property type="protein sequence ID" value="ENSP00000422556.1"/>
    <property type="gene ID" value="ENSG00000113494.17"/>
</dbReference>
<dbReference type="Ensembl" id="ENST00000513753.5">
    <molecule id="P16471-6"/>
    <property type="protein sequence ID" value="ENSP00000424841.1"/>
    <property type="gene ID" value="ENSG00000113494.17"/>
</dbReference>
<dbReference type="Ensembl" id="ENST00000514088.5">
    <molecule id="P16471-7"/>
    <property type="protein sequence ID" value="ENSP00000422935.2"/>
    <property type="gene ID" value="ENSG00000113494.17"/>
</dbReference>
<dbReference type="Ensembl" id="ENST00000542609.5">
    <molecule id="P16471-4"/>
    <property type="protein sequence ID" value="ENSP00000441813.2"/>
    <property type="gene ID" value="ENSG00000113494.17"/>
</dbReference>
<dbReference type="Ensembl" id="ENST00000618457.5">
    <molecule id="P16471-1"/>
    <property type="protein sequence ID" value="ENSP00000482954.1"/>
    <property type="gene ID" value="ENSG00000113494.17"/>
</dbReference>
<dbReference type="Ensembl" id="ENST00000619676.4">
    <molecule id="P16471-5"/>
    <property type="protein sequence ID" value="ENSP00000484768.1"/>
    <property type="gene ID" value="ENSG00000113494.17"/>
</dbReference>
<dbReference type="Ensembl" id="ENST00000620785.4">
    <molecule id="P16471-2"/>
    <property type="protein sequence ID" value="ENSP00000482689.1"/>
    <property type="gene ID" value="ENSG00000113494.17"/>
</dbReference>
<dbReference type="GeneID" id="5618"/>
<dbReference type="KEGG" id="hsa:5618"/>
<dbReference type="MANE-Select" id="ENST00000618457.5">
    <property type="protein sequence ID" value="ENSP00000482954.1"/>
    <property type="RefSeq nucleotide sequence ID" value="NM_000949.7"/>
    <property type="RefSeq protein sequence ID" value="NP_000940.1"/>
</dbReference>
<dbReference type="UCSC" id="uc003jjg.3">
    <molecule id="P16471-1"/>
    <property type="organism name" value="human"/>
</dbReference>
<dbReference type="AGR" id="HGNC:9446"/>
<dbReference type="CTD" id="5618"/>
<dbReference type="DisGeNET" id="5618"/>
<dbReference type="GeneCards" id="PRLR"/>
<dbReference type="HGNC" id="HGNC:9446">
    <property type="gene designation" value="PRLR"/>
</dbReference>
<dbReference type="HPA" id="ENSG00000113494">
    <property type="expression patterns" value="Tissue enhanced (choroid plexus, parathyroid gland)"/>
</dbReference>
<dbReference type="MalaCards" id="PRLR"/>
<dbReference type="MIM" id="176761">
    <property type="type" value="gene"/>
</dbReference>
<dbReference type="MIM" id="615554">
    <property type="type" value="phenotype"/>
</dbReference>
<dbReference type="MIM" id="615555">
    <property type="type" value="phenotype"/>
</dbReference>
<dbReference type="neXtProt" id="NX_P16471"/>
<dbReference type="OpenTargets" id="ENSG00000113494"/>
<dbReference type="Orphanet" id="397685">
    <property type="disease" value="Familial hyperprolactinemia"/>
</dbReference>
<dbReference type="PharmGKB" id="PA33791"/>
<dbReference type="VEuPathDB" id="HostDB:ENSG00000113494"/>
<dbReference type="eggNOG" id="ENOG502R22A">
    <property type="taxonomic scope" value="Eukaryota"/>
</dbReference>
<dbReference type="GeneTree" id="ENSGT00940000154851"/>
<dbReference type="HOGENOM" id="CLU_017892_1_0_1"/>
<dbReference type="InParanoid" id="P16471"/>
<dbReference type="OMA" id="ANITCTW"/>
<dbReference type="OrthoDB" id="8858139at2759"/>
<dbReference type="PAN-GO" id="P16471">
    <property type="GO annotations" value="10 GO annotations based on evolutionary models"/>
</dbReference>
<dbReference type="PhylomeDB" id="P16471"/>
<dbReference type="TreeFam" id="TF330851"/>
<dbReference type="PathwayCommons" id="P16471"/>
<dbReference type="Reactome" id="R-HSA-1170546">
    <property type="pathway name" value="Prolactin receptor signaling"/>
</dbReference>
<dbReference type="Reactome" id="R-HSA-982772">
    <property type="pathway name" value="Growth hormone receptor signaling"/>
</dbReference>
<dbReference type="SignaLink" id="P16471"/>
<dbReference type="SIGNOR" id="P16471"/>
<dbReference type="BioGRID-ORCS" id="5618">
    <property type="hits" value="10 hits in 1156 CRISPR screens"/>
</dbReference>
<dbReference type="ChiTaRS" id="PRLR">
    <property type="organism name" value="human"/>
</dbReference>
<dbReference type="EvolutionaryTrace" id="P16471"/>
<dbReference type="GenomeRNAi" id="5618"/>
<dbReference type="Pharos" id="P16471">
    <property type="development level" value="Tbio"/>
</dbReference>
<dbReference type="PRO" id="PR:P16471"/>
<dbReference type="Proteomes" id="UP000005640">
    <property type="component" value="Chromosome 5"/>
</dbReference>
<dbReference type="RNAct" id="P16471">
    <property type="molecule type" value="protein"/>
</dbReference>
<dbReference type="Bgee" id="ENSG00000113494">
    <property type="expression patterns" value="Expressed in placenta and 152 other cell types or tissues"/>
</dbReference>
<dbReference type="ExpressionAtlas" id="P16471">
    <property type="expression patterns" value="baseline and differential"/>
</dbReference>
<dbReference type="GO" id="GO:0009986">
    <property type="term" value="C:cell surface"/>
    <property type="evidence" value="ECO:0000314"/>
    <property type="project" value="UniProtKB"/>
</dbReference>
<dbReference type="GO" id="GO:0031904">
    <property type="term" value="C:endosome lumen"/>
    <property type="evidence" value="ECO:0000304"/>
    <property type="project" value="Reactome"/>
</dbReference>
<dbReference type="GO" id="GO:0009897">
    <property type="term" value="C:external side of plasma membrane"/>
    <property type="evidence" value="ECO:0000318"/>
    <property type="project" value="GO_Central"/>
</dbReference>
<dbReference type="GO" id="GO:0005576">
    <property type="term" value="C:extracellular region"/>
    <property type="evidence" value="ECO:0007669"/>
    <property type="project" value="UniProtKB-SubCell"/>
</dbReference>
<dbReference type="GO" id="GO:0005886">
    <property type="term" value="C:plasma membrane"/>
    <property type="evidence" value="ECO:0000304"/>
    <property type="project" value="Reactome"/>
</dbReference>
<dbReference type="GO" id="GO:0043235">
    <property type="term" value="C:receptor complex"/>
    <property type="evidence" value="ECO:0000318"/>
    <property type="project" value="GO_Central"/>
</dbReference>
<dbReference type="GO" id="GO:0019955">
    <property type="term" value="F:cytokine binding"/>
    <property type="evidence" value="ECO:0000318"/>
    <property type="project" value="GO_Central"/>
</dbReference>
<dbReference type="GO" id="GO:0008289">
    <property type="term" value="F:lipid binding"/>
    <property type="evidence" value="ECO:0000353"/>
    <property type="project" value="DisProt"/>
</dbReference>
<dbReference type="GO" id="GO:0046872">
    <property type="term" value="F:metal ion binding"/>
    <property type="evidence" value="ECO:0007669"/>
    <property type="project" value="UniProtKB-KW"/>
</dbReference>
<dbReference type="GO" id="GO:0017046">
    <property type="term" value="F:peptide hormone binding"/>
    <property type="evidence" value="ECO:0000353"/>
    <property type="project" value="BHF-UCL"/>
</dbReference>
<dbReference type="GO" id="GO:0004925">
    <property type="term" value="F:prolactin receptor activity"/>
    <property type="evidence" value="ECO:0000314"/>
    <property type="project" value="UniProtKB"/>
</dbReference>
<dbReference type="GO" id="GO:0019901">
    <property type="term" value="F:protein kinase binding"/>
    <property type="evidence" value="ECO:0007669"/>
    <property type="project" value="Ensembl"/>
</dbReference>
<dbReference type="GO" id="GO:0042976">
    <property type="term" value="P:activation of Janus kinase activity"/>
    <property type="evidence" value="ECO:0000314"/>
    <property type="project" value="UniProtKB"/>
</dbReference>
<dbReference type="GO" id="GO:0007171">
    <property type="term" value="P:activation of transmembrane receptor protein tyrosine kinase activity"/>
    <property type="evidence" value="ECO:0000314"/>
    <property type="project" value="UniProtKB"/>
</dbReference>
<dbReference type="GO" id="GO:0007259">
    <property type="term" value="P:cell surface receptor signaling pathway via JAK-STAT"/>
    <property type="evidence" value="ECO:0007669"/>
    <property type="project" value="Ensembl"/>
</dbReference>
<dbReference type="GO" id="GO:0097011">
    <property type="term" value="P:cellular response to granulocyte macrophage colony-stimulating factor stimulus"/>
    <property type="evidence" value="ECO:0007669"/>
    <property type="project" value="Ensembl"/>
</dbReference>
<dbReference type="GO" id="GO:0019221">
    <property type="term" value="P:cytokine-mediated signaling pathway"/>
    <property type="evidence" value="ECO:0000318"/>
    <property type="project" value="GO_Central"/>
</dbReference>
<dbReference type="GO" id="GO:0007566">
    <property type="term" value="P:embryo implantation"/>
    <property type="evidence" value="ECO:0000304"/>
    <property type="project" value="ProtInc"/>
</dbReference>
<dbReference type="GO" id="GO:0007595">
    <property type="term" value="P:lactation"/>
    <property type="evidence" value="ECO:0000304"/>
    <property type="project" value="ProtInc"/>
</dbReference>
<dbReference type="GO" id="GO:0060749">
    <property type="term" value="P:mammary gland alveolus development"/>
    <property type="evidence" value="ECO:0007669"/>
    <property type="project" value="Ensembl"/>
</dbReference>
<dbReference type="GO" id="GO:0060644">
    <property type="term" value="P:mammary gland epithelial cell differentiation"/>
    <property type="evidence" value="ECO:0007669"/>
    <property type="project" value="Ensembl"/>
</dbReference>
<dbReference type="GO" id="GO:0043066">
    <property type="term" value="P:negative regulation of apoptotic process"/>
    <property type="evidence" value="ECO:0000314"/>
    <property type="project" value="UniProtKB"/>
</dbReference>
<dbReference type="GO" id="GO:0030890">
    <property type="term" value="P:positive regulation of B cell proliferation"/>
    <property type="evidence" value="ECO:0007669"/>
    <property type="project" value="Ensembl"/>
</dbReference>
<dbReference type="GO" id="GO:0008284">
    <property type="term" value="P:positive regulation of cell population proliferation"/>
    <property type="evidence" value="ECO:0000318"/>
    <property type="project" value="GO_Central"/>
</dbReference>
<dbReference type="GO" id="GO:0120162">
    <property type="term" value="P:positive regulation of cold-induced thermogenesis"/>
    <property type="evidence" value="ECO:0000250"/>
    <property type="project" value="YuBioLab"/>
</dbReference>
<dbReference type="GO" id="GO:0060736">
    <property type="term" value="P:prostate gland growth"/>
    <property type="evidence" value="ECO:0007669"/>
    <property type="project" value="Ensembl"/>
</dbReference>
<dbReference type="GO" id="GO:0030155">
    <property type="term" value="P:regulation of cell adhesion"/>
    <property type="evidence" value="ECO:0007669"/>
    <property type="project" value="Ensembl"/>
</dbReference>
<dbReference type="GO" id="GO:0030856">
    <property type="term" value="P:regulation of epithelial cell differentiation"/>
    <property type="evidence" value="ECO:0007669"/>
    <property type="project" value="Ensembl"/>
</dbReference>
<dbReference type="GO" id="GO:0009617">
    <property type="term" value="P:response to bacterium"/>
    <property type="evidence" value="ECO:0007669"/>
    <property type="project" value="Ensembl"/>
</dbReference>
<dbReference type="GO" id="GO:0006694">
    <property type="term" value="P:steroid biosynthetic process"/>
    <property type="evidence" value="ECO:0000303"/>
    <property type="project" value="UniProtKB"/>
</dbReference>
<dbReference type="CDD" id="cd00063">
    <property type="entry name" value="FN3"/>
    <property type="match status" value="2"/>
</dbReference>
<dbReference type="DisProt" id="DP01106"/>
<dbReference type="FunFam" id="2.60.40.10:FF:000287">
    <property type="entry name" value="Prolactin receptor"/>
    <property type="match status" value="1"/>
</dbReference>
<dbReference type="FunFam" id="2.60.40.10:FF:000358">
    <property type="entry name" value="Prolactin receptor"/>
    <property type="match status" value="1"/>
</dbReference>
<dbReference type="Gene3D" id="2.60.40.10">
    <property type="entry name" value="Immunoglobulins"/>
    <property type="match status" value="2"/>
</dbReference>
<dbReference type="InterPro" id="IPR003961">
    <property type="entry name" value="FN3_dom"/>
</dbReference>
<dbReference type="InterPro" id="IPR036116">
    <property type="entry name" value="FN3_sf"/>
</dbReference>
<dbReference type="InterPro" id="IPR015152">
    <property type="entry name" value="Growth/epo_recpt_lig-bind"/>
</dbReference>
<dbReference type="InterPro" id="IPR013783">
    <property type="entry name" value="Ig-like_fold"/>
</dbReference>
<dbReference type="InterPro" id="IPR003528">
    <property type="entry name" value="Long_hematopoietin_rcpt_CS"/>
</dbReference>
<dbReference type="InterPro" id="IPR050379">
    <property type="entry name" value="Type-I_Cytokine_Rcpt"/>
</dbReference>
<dbReference type="PANTHER" id="PTHR23036">
    <property type="entry name" value="CYTOKINE RECEPTOR"/>
    <property type="match status" value="1"/>
</dbReference>
<dbReference type="PANTHER" id="PTHR23036:SF86">
    <property type="entry name" value="PROLACTIN RECEPTOR"/>
    <property type="match status" value="1"/>
</dbReference>
<dbReference type="Pfam" id="PF09067">
    <property type="entry name" value="EpoR_lig-bind"/>
    <property type="match status" value="1"/>
</dbReference>
<dbReference type="SMART" id="SM00060">
    <property type="entry name" value="FN3"/>
    <property type="match status" value="2"/>
</dbReference>
<dbReference type="SUPFAM" id="SSF49265">
    <property type="entry name" value="Fibronectin type III"/>
    <property type="match status" value="2"/>
</dbReference>
<dbReference type="PROSITE" id="PS50853">
    <property type="entry name" value="FN3"/>
    <property type="match status" value="2"/>
</dbReference>
<dbReference type="PROSITE" id="PS01352">
    <property type="entry name" value="HEMATOPO_REC_L_F1"/>
    <property type="match status" value="1"/>
</dbReference>